<keyword id="KW-0903">Direct protein sequencing</keyword>
<keyword id="KW-0325">Glycoprotein</keyword>
<keyword id="KW-1267">Proteomics identification</keyword>
<keyword id="KW-1185">Reference proteome</keyword>
<keyword id="KW-0964">Secreted</keyword>
<keyword id="KW-0732">Signal</keyword>
<feature type="signal peptide" evidence="2 3 4">
    <location>
        <begin position="1"/>
        <end position="18"/>
    </location>
</feature>
<feature type="chain" id="PRO_0000036373" description="Mammaglobin-B">
    <location>
        <begin position="19"/>
        <end position="95"/>
    </location>
</feature>
<feature type="glycosylation site" description="N-linked (GlcNAc...) asparagine" evidence="1">
    <location>
        <position position="68"/>
    </location>
</feature>
<protein>
    <recommendedName>
        <fullName>Mammaglobin-B</fullName>
    </recommendedName>
    <alternativeName>
        <fullName>Lacryglobin</fullName>
    </alternativeName>
    <alternativeName>
        <fullName>Lipophilin-C</fullName>
    </alternativeName>
    <alternativeName>
        <fullName>Mammaglobin-2</fullName>
    </alternativeName>
    <alternativeName>
        <fullName>Secretoglobin family 2A member 1</fullName>
    </alternativeName>
</protein>
<reference key="1">
    <citation type="journal article" date="1998" name="Genomics">
        <title>Identification of mammaglobin B, a novel member of the uteroglobin gene family.</title>
        <authorList>
            <person name="Becker R.M."/>
            <person name="Darrow C."/>
            <person name="Zimonjic D.B."/>
            <person name="Popescu N.C."/>
            <person name="Watson M.A."/>
            <person name="Fleming T.P."/>
        </authorList>
    </citation>
    <scope>NUCLEOTIDE SEQUENCE [MRNA]</scope>
</reference>
<reference key="2">
    <citation type="journal article" date="1999" name="Biochem. Biophys. Res. Commun.">
        <title>Lipophilins: human peptides homologous to rat prostatein.</title>
        <authorList>
            <person name="Zhao C."/>
            <person name="Nguyen T."/>
            <person name="Yusifov T."/>
            <person name="Glasgow B.J."/>
            <person name="Lehrer R.I."/>
        </authorList>
    </citation>
    <scope>NUCLEOTIDE SEQUENCE [MRNA]</scope>
</reference>
<reference key="3">
    <citation type="journal article" date="2004" name="Genome Res.">
        <title>The status, quality, and expansion of the NIH full-length cDNA project: the Mammalian Gene Collection (MGC).</title>
        <authorList>
            <consortium name="The MGC Project Team"/>
        </authorList>
    </citation>
    <scope>NUCLEOTIDE SEQUENCE [LARGE SCALE MRNA]</scope>
    <source>
        <tissue>Thyroid</tissue>
    </source>
</reference>
<reference key="4">
    <citation type="journal article" date="1997" name="Electrophoresis">
        <title>Establishment of the human reflex tear two-dimensional polyacrylamide gel electrophoresis reference map: new proteins of potential diagnostic value.</title>
        <authorList>
            <person name="Molloy M.P."/>
            <person name="Bolis S."/>
            <person name="Herbert B.R."/>
            <person name="Ou K."/>
            <person name="Tyler M.I."/>
            <person name="van Dyk D.D."/>
            <person name="Willcox M.D."/>
            <person name="Gooley A.A."/>
            <person name="Williams K.L."/>
            <person name="Morris C.A."/>
            <person name="Walsh B.J."/>
        </authorList>
    </citation>
    <scope>PROTEIN SEQUENCE OF 19-85</scope>
    <source>
        <tissue>Tear</tissue>
    </source>
</reference>
<reference key="5">
    <citation type="journal article" date="1998" name="FEBS Lett.">
        <title>Lipophilin, a novel heterodimeric protein of human tears.</title>
        <authorList>
            <person name="Lehrer R.I."/>
            <person name="Xu G."/>
            <person name="Abduragimov A."/>
            <person name="Dinh N.N."/>
            <person name="Qu X.-D."/>
            <person name="Martin D."/>
            <person name="Glasgow B.J."/>
        </authorList>
    </citation>
    <scope>PROTEIN SEQUENCE OF 19-46 AND 60-78</scope>
    <scope>MASS SPECTROMETRY</scope>
    <source>
        <tissue>Tear</tissue>
    </source>
</reference>
<reference key="6">
    <citation type="journal article" date="2015" name="J. Proteome Res.">
        <title>Human basal tear peptidome characterization by CID, HCD, and ETD followed by in silico and in vitro analyses for antimicrobial peptide identification.</title>
        <authorList>
            <person name="Azkargorta M."/>
            <person name="Soria J."/>
            <person name="Ojeda C."/>
            <person name="Guzman F."/>
            <person name="Acera A."/>
            <person name="Iloro I."/>
            <person name="Suarez T."/>
            <person name="Elortza F."/>
        </authorList>
    </citation>
    <scope>PROTEIN SEQUENCE OF 19-46 AND 84-95</scope>
    <scope>IDENTIFICATION BY MASS SPECTROMETRY</scope>
    <source>
        <tissue>Tear</tissue>
    </source>
</reference>
<reference key="7">
    <citation type="journal article" date="2008" name="Proc. Natl. Acad. Sci. U.S.A.">
        <title>A quantitative atlas of mitotic phosphorylation.</title>
        <authorList>
            <person name="Dephoure N."/>
            <person name="Zhou C."/>
            <person name="Villen J."/>
            <person name="Beausoleil S.A."/>
            <person name="Bakalarski C.E."/>
            <person name="Elledge S.J."/>
            <person name="Gygi S.P."/>
        </authorList>
    </citation>
    <scope>IDENTIFICATION BY MASS SPECTROMETRY [LARGE SCALE ANALYSIS]</scope>
    <source>
        <tissue>Cervix carcinoma</tissue>
    </source>
</reference>
<evidence type="ECO:0000255" key="1"/>
<evidence type="ECO:0000269" key="2">
    <source>
    </source>
</evidence>
<evidence type="ECO:0000269" key="3">
    <source>
    </source>
</evidence>
<evidence type="ECO:0000269" key="4">
    <source>
    </source>
</evidence>
<evidence type="ECO:0000305" key="5"/>
<accession>O75556</accession>
<comment type="function">
    <text>May bind androgens and other steroids, may also bind estramustine, a chemotherapeutic agent used for prostate cancer. May be under transcriptional regulation of steroid hormones.</text>
</comment>
<comment type="subunit">
    <text>Heterodimer of a lipophilin A and a lipophilin C (mammaglobin B) monomer associated head to head.</text>
</comment>
<comment type="subcellular location">
    <subcellularLocation>
        <location evidence="5">Secreted</location>
    </subcellularLocation>
</comment>
<comment type="tissue specificity">
    <text>Expressed in thymus, trachea, kidney, steroid responsive tissues (prostate, testis, uterus, breast and ovary) and salivary gland.</text>
</comment>
<comment type="mass spectrometry"/>
<comment type="similarity">
    <text evidence="5">Belongs to the secretoglobin family. Lipophilin subfamily.</text>
</comment>
<name>SG2A1_HUMAN</name>
<gene>
    <name type="primary">SCGB2A1</name>
    <name type="synonym">LIPHC</name>
    <name type="synonym">MGB2</name>
    <name type="synonym">UGB3</name>
</gene>
<dbReference type="EMBL" id="AF071219">
    <property type="protein sequence ID" value="AAC79996.1"/>
    <property type="molecule type" value="mRNA"/>
</dbReference>
<dbReference type="EMBL" id="AJ224173">
    <property type="protein sequence ID" value="CAA11865.1"/>
    <property type="molecule type" value="mRNA"/>
</dbReference>
<dbReference type="EMBL" id="BC062218">
    <property type="protein sequence ID" value="AAH62218.1"/>
    <property type="molecule type" value="mRNA"/>
</dbReference>
<dbReference type="CCDS" id="CCDS8016.1"/>
<dbReference type="RefSeq" id="NP_002398.1">
    <property type="nucleotide sequence ID" value="NM_002407.3"/>
</dbReference>
<dbReference type="SMR" id="O75556"/>
<dbReference type="BioGRID" id="110402">
    <property type="interactions" value="147"/>
</dbReference>
<dbReference type="CORUM" id="O75556"/>
<dbReference type="FunCoup" id="O75556">
    <property type="interactions" value="296"/>
</dbReference>
<dbReference type="IntAct" id="O75556">
    <property type="interactions" value="98"/>
</dbReference>
<dbReference type="MINT" id="O75556"/>
<dbReference type="STRING" id="9606.ENSP00000244930"/>
<dbReference type="GlyConnect" id="1487">
    <property type="glycosylation" value="2 N-Linked glycans (1 site)"/>
</dbReference>
<dbReference type="GlyCosmos" id="O75556">
    <property type="glycosylation" value="1 site, 2 glycans"/>
</dbReference>
<dbReference type="GlyGen" id="O75556">
    <property type="glycosylation" value="1 site, 2 N-linked glycans (1 site)"/>
</dbReference>
<dbReference type="iPTMnet" id="O75556"/>
<dbReference type="PhosphoSitePlus" id="O75556"/>
<dbReference type="BioMuta" id="SCGB2A1"/>
<dbReference type="CPTAC" id="CPTAC-1507"/>
<dbReference type="jPOST" id="O75556"/>
<dbReference type="MassIVE" id="O75556"/>
<dbReference type="PaxDb" id="9606-ENSP00000244930"/>
<dbReference type="PeptideAtlas" id="O75556"/>
<dbReference type="ProteomicsDB" id="50084"/>
<dbReference type="Pumba" id="O75556"/>
<dbReference type="Antibodypedia" id="28416">
    <property type="antibodies" value="205 antibodies from 31 providers"/>
</dbReference>
<dbReference type="DNASU" id="4246"/>
<dbReference type="Ensembl" id="ENST00000244930.6">
    <property type="protein sequence ID" value="ENSP00000244930.4"/>
    <property type="gene ID" value="ENSG00000124939.6"/>
</dbReference>
<dbReference type="GeneID" id="4246"/>
<dbReference type="KEGG" id="hsa:4246"/>
<dbReference type="MANE-Select" id="ENST00000244930.6">
    <property type="protein sequence ID" value="ENSP00000244930.4"/>
    <property type="RefSeq nucleotide sequence ID" value="NM_002407.3"/>
    <property type="RefSeq protein sequence ID" value="NP_002398.1"/>
</dbReference>
<dbReference type="UCSC" id="uc001nta.2">
    <property type="organism name" value="human"/>
</dbReference>
<dbReference type="AGR" id="HGNC:7051"/>
<dbReference type="CTD" id="4246"/>
<dbReference type="DisGeNET" id="4246"/>
<dbReference type="GeneCards" id="SCGB2A1"/>
<dbReference type="HGNC" id="HGNC:7051">
    <property type="gene designation" value="SCGB2A1"/>
</dbReference>
<dbReference type="HPA" id="ENSG00000124939">
    <property type="expression patterns" value="Group enriched (cervix, epididymis)"/>
</dbReference>
<dbReference type="MIM" id="604398">
    <property type="type" value="gene"/>
</dbReference>
<dbReference type="neXtProt" id="NX_O75556"/>
<dbReference type="OpenTargets" id="ENSG00000124939"/>
<dbReference type="PharmGKB" id="PA34992"/>
<dbReference type="VEuPathDB" id="HostDB:ENSG00000124939"/>
<dbReference type="eggNOG" id="ENOG502TE00">
    <property type="taxonomic scope" value="Eukaryota"/>
</dbReference>
<dbReference type="GeneTree" id="ENSGT00390000013802"/>
<dbReference type="HOGENOM" id="CLU_161063_0_0_1"/>
<dbReference type="InParanoid" id="O75556"/>
<dbReference type="OMA" id="DSIWCNM"/>
<dbReference type="OrthoDB" id="9741516at2759"/>
<dbReference type="PAN-GO" id="O75556">
    <property type="GO annotations" value="2 GO annotations based on evolutionary models"/>
</dbReference>
<dbReference type="PhylomeDB" id="O75556"/>
<dbReference type="TreeFam" id="TF338521"/>
<dbReference type="PathwayCommons" id="O75556"/>
<dbReference type="SignaLink" id="O75556"/>
<dbReference type="BioGRID-ORCS" id="4246">
    <property type="hits" value="18 hits in 1111 CRISPR screens"/>
</dbReference>
<dbReference type="ChiTaRS" id="SCGB2A1">
    <property type="organism name" value="human"/>
</dbReference>
<dbReference type="GeneWiki" id="Mammaglobin-B"/>
<dbReference type="GenomeRNAi" id="4246"/>
<dbReference type="Pharos" id="O75556">
    <property type="development level" value="Tbio"/>
</dbReference>
<dbReference type="PRO" id="PR:O75556"/>
<dbReference type="Proteomes" id="UP000005640">
    <property type="component" value="Chromosome 11"/>
</dbReference>
<dbReference type="RNAct" id="O75556">
    <property type="molecule type" value="protein"/>
</dbReference>
<dbReference type="Bgee" id="ENSG00000124939">
    <property type="expression patterns" value="Expressed in corpus epididymis and 110 other cell types or tissues"/>
</dbReference>
<dbReference type="GO" id="GO:0005615">
    <property type="term" value="C:extracellular space"/>
    <property type="evidence" value="ECO:0000314"/>
    <property type="project" value="UniProtKB"/>
</dbReference>
<dbReference type="GO" id="GO:0030521">
    <property type="term" value="P:androgen receptor signaling pathway"/>
    <property type="evidence" value="ECO:0000314"/>
    <property type="project" value="UniProtKB"/>
</dbReference>
<dbReference type="CDD" id="cd00633">
    <property type="entry name" value="Secretoglobin"/>
    <property type="match status" value="1"/>
</dbReference>
<dbReference type="InterPro" id="IPR016126">
    <property type="entry name" value="Secretoglobin"/>
</dbReference>
<dbReference type="InterPro" id="IPR035960">
    <property type="entry name" value="Secretoglobin_sf"/>
</dbReference>
<dbReference type="PANTHER" id="PTHR14037:SF4">
    <property type="entry name" value="MAMMAGLOBIN-B"/>
    <property type="match status" value="1"/>
</dbReference>
<dbReference type="PANTHER" id="PTHR14037">
    <property type="entry name" value="MAMMAGLOBIN-RELATED"/>
    <property type="match status" value="1"/>
</dbReference>
<dbReference type="Pfam" id="PF01099">
    <property type="entry name" value="Uteroglobin"/>
    <property type="match status" value="1"/>
</dbReference>
<dbReference type="SUPFAM" id="SSF48201">
    <property type="entry name" value="Uteroglobin-like"/>
    <property type="match status" value="1"/>
</dbReference>
<dbReference type="PROSITE" id="PS51311">
    <property type="entry name" value="SCGB"/>
    <property type="match status" value="1"/>
</dbReference>
<proteinExistence type="evidence at protein level"/>
<sequence>MKLLMVLMLAALLLHCYADSGCKLLEDMVEKTINSDISIPEYKELLQEFIDSDAAAEAMGKFKQCFLNQSHRTLKNFGLMMHTVYDSIWCNMKSN</sequence>
<organism>
    <name type="scientific">Homo sapiens</name>
    <name type="common">Human</name>
    <dbReference type="NCBI Taxonomy" id="9606"/>
    <lineage>
        <taxon>Eukaryota</taxon>
        <taxon>Metazoa</taxon>
        <taxon>Chordata</taxon>
        <taxon>Craniata</taxon>
        <taxon>Vertebrata</taxon>
        <taxon>Euteleostomi</taxon>
        <taxon>Mammalia</taxon>
        <taxon>Eutheria</taxon>
        <taxon>Euarchontoglires</taxon>
        <taxon>Primates</taxon>
        <taxon>Haplorrhini</taxon>
        <taxon>Catarrhini</taxon>
        <taxon>Hominidae</taxon>
        <taxon>Homo</taxon>
    </lineage>
</organism>